<name>ISOA2_ORYSJ</name>
<comment type="function">
    <text evidence="4 5">Starch-debranching enzyme involved in amylopectin biosynthesis in endosperm. Functions by removing excess branches or improper branches that interfere with the formation of double helices of the cluster chains of amylopectin and crystallization of starch (PubMed:16953433, PubMed:21436381). Works together with ISA1 as heterooligomer. The heterooligomer ISA1 and ISA2 possesses higher affinity than the ISA1 homooligomer for various branched polyglucans in vitro, but no marked differences exist in chain preferences for debranching of amylopectin and phytoglycogen between these forms (PubMed:16953433, PubMed:21436381).</text>
</comment>
<comment type="catalytic activity">
    <reaction evidence="5">
        <text>Hydrolysis of (1-&gt;6)-alpha-D-glucosidic branch linkages in glycogen, amylopectin and their beta-limit dextrins.</text>
        <dbReference type="EC" id="3.2.1.68"/>
    </reaction>
</comment>
<comment type="subunit">
    <text evidence="4">Forms a hetero-hexamer composed of five ISA1 and one ISA2.</text>
</comment>
<comment type="subcellular location">
    <subcellularLocation>
        <location evidence="1">Plastid</location>
        <location evidence="1">Chloroplast</location>
    </subcellularLocation>
</comment>
<comment type="tissue specificity">
    <text evidence="3">Highly expressed in developing endosperm and leaves.</text>
</comment>
<comment type="similarity">
    <text evidence="7">Belongs to the glycosyl hydrolase 13 family.</text>
</comment>
<comment type="sequence caution" evidence="7">
    <conflict type="erroneous initiation">
        <sequence resource="EMBL-CDS" id="BAF17370"/>
    </conflict>
    <text>Truncated N-terminus.</text>
</comment>
<comment type="sequence caution" evidence="7">
    <conflict type="erroneous initiation">
        <sequence resource="EMBL-CDS" id="BAS93869"/>
    </conflict>
    <text>Truncated N-terminus.</text>
</comment>
<comment type="sequence caution" evidence="7">
    <conflict type="erroneous initiation">
        <sequence resource="EMBL-CDS" id="EEE62506"/>
    </conflict>
    <text>Truncated N-terminus.</text>
</comment>
<organism>
    <name type="scientific">Oryza sativa subsp. japonica</name>
    <name type="common">Rice</name>
    <dbReference type="NCBI Taxonomy" id="39947"/>
    <lineage>
        <taxon>Eukaryota</taxon>
        <taxon>Viridiplantae</taxon>
        <taxon>Streptophyta</taxon>
        <taxon>Embryophyta</taxon>
        <taxon>Tracheophyta</taxon>
        <taxon>Spermatophyta</taxon>
        <taxon>Magnoliopsida</taxon>
        <taxon>Liliopsida</taxon>
        <taxon>Poales</taxon>
        <taxon>Poaceae</taxon>
        <taxon>BOP clade</taxon>
        <taxon>Oryzoideae</taxon>
        <taxon>Oryzeae</taxon>
        <taxon>Oryzinae</taxon>
        <taxon>Oryza</taxon>
        <taxon>Oryza sativa</taxon>
    </lineage>
</organism>
<protein>
    <recommendedName>
        <fullName evidence="7">Isoamylase 2, chloroplastic</fullName>
        <shortName evidence="6">OsISA2</shortName>
        <ecNumber evidence="4">3.2.1.68</ecNumber>
    </recommendedName>
</protein>
<accession>Q6AU80</accession>
<accession>A0A0P0WM70</accession>
<accession>B9FHZ3</accession>
<accession>Q0DIF3</accession>
<reference key="1">
    <citation type="journal article" date="2005" name="Mol. Genet. Genomics">
        <title>A fine physical map of the rice chromosome 5.</title>
        <authorList>
            <person name="Cheng C.-H."/>
            <person name="Chung M.C."/>
            <person name="Liu S.-M."/>
            <person name="Chen S.-K."/>
            <person name="Kao F.Y."/>
            <person name="Lin S.-J."/>
            <person name="Hsiao S.-H."/>
            <person name="Tseng I.C."/>
            <person name="Hsing Y.-I.C."/>
            <person name="Wu H.-P."/>
            <person name="Chen C.-S."/>
            <person name="Shaw J.-F."/>
            <person name="Wu J."/>
            <person name="Matsumoto T."/>
            <person name="Sasaki T."/>
            <person name="Chen H.-C."/>
            <person name="Chow T.-Y."/>
        </authorList>
    </citation>
    <scope>NUCLEOTIDE SEQUENCE [LARGE SCALE GENOMIC DNA]</scope>
    <source>
        <strain>cv. Nipponbare</strain>
    </source>
</reference>
<reference key="2">
    <citation type="journal article" date="2005" name="Nature">
        <title>The map-based sequence of the rice genome.</title>
        <authorList>
            <consortium name="International rice genome sequencing project (IRGSP)"/>
        </authorList>
    </citation>
    <scope>NUCLEOTIDE SEQUENCE [LARGE SCALE GENOMIC DNA]</scope>
    <source>
        <strain>cv. Nipponbare</strain>
    </source>
</reference>
<reference key="3">
    <citation type="journal article" date="2008" name="Nucleic Acids Res.">
        <title>The rice annotation project database (RAP-DB): 2008 update.</title>
        <authorList>
            <consortium name="The rice annotation project (RAP)"/>
        </authorList>
    </citation>
    <scope>GENOME REANNOTATION</scope>
    <source>
        <strain>cv. Nipponbare</strain>
    </source>
</reference>
<reference key="4">
    <citation type="journal article" date="2013" name="Rice">
        <title>Improvement of the Oryza sativa Nipponbare reference genome using next generation sequence and optical map data.</title>
        <authorList>
            <person name="Kawahara Y."/>
            <person name="de la Bastide M."/>
            <person name="Hamilton J.P."/>
            <person name="Kanamori H."/>
            <person name="McCombie W.R."/>
            <person name="Ouyang S."/>
            <person name="Schwartz D.C."/>
            <person name="Tanaka T."/>
            <person name="Wu J."/>
            <person name="Zhou S."/>
            <person name="Childs K.L."/>
            <person name="Davidson R.M."/>
            <person name="Lin H."/>
            <person name="Quesada-Ocampo L."/>
            <person name="Vaillancourt B."/>
            <person name="Sakai H."/>
            <person name="Lee S.S."/>
            <person name="Kim J."/>
            <person name="Numa H."/>
            <person name="Itoh T."/>
            <person name="Buell C.R."/>
            <person name="Matsumoto T."/>
        </authorList>
    </citation>
    <scope>GENOME REANNOTATION</scope>
    <source>
        <strain>cv. Nipponbare</strain>
    </source>
</reference>
<reference key="5">
    <citation type="journal article" date="2005" name="PLoS Biol.">
        <title>The genomes of Oryza sativa: a history of duplications.</title>
        <authorList>
            <person name="Yu J."/>
            <person name="Wang J."/>
            <person name="Lin W."/>
            <person name="Li S."/>
            <person name="Li H."/>
            <person name="Zhou J."/>
            <person name="Ni P."/>
            <person name="Dong W."/>
            <person name="Hu S."/>
            <person name="Zeng C."/>
            <person name="Zhang J."/>
            <person name="Zhang Y."/>
            <person name="Li R."/>
            <person name="Xu Z."/>
            <person name="Li S."/>
            <person name="Li X."/>
            <person name="Zheng H."/>
            <person name="Cong L."/>
            <person name="Lin L."/>
            <person name="Yin J."/>
            <person name="Geng J."/>
            <person name="Li G."/>
            <person name="Shi J."/>
            <person name="Liu J."/>
            <person name="Lv H."/>
            <person name="Li J."/>
            <person name="Wang J."/>
            <person name="Deng Y."/>
            <person name="Ran L."/>
            <person name="Shi X."/>
            <person name="Wang X."/>
            <person name="Wu Q."/>
            <person name="Li C."/>
            <person name="Ren X."/>
            <person name="Wang J."/>
            <person name="Wang X."/>
            <person name="Li D."/>
            <person name="Liu D."/>
            <person name="Zhang X."/>
            <person name="Ji Z."/>
            <person name="Zhao W."/>
            <person name="Sun Y."/>
            <person name="Zhang Z."/>
            <person name="Bao J."/>
            <person name="Han Y."/>
            <person name="Dong L."/>
            <person name="Ji J."/>
            <person name="Chen P."/>
            <person name="Wu S."/>
            <person name="Liu J."/>
            <person name="Xiao Y."/>
            <person name="Bu D."/>
            <person name="Tan J."/>
            <person name="Yang L."/>
            <person name="Ye C."/>
            <person name="Zhang J."/>
            <person name="Xu J."/>
            <person name="Zhou Y."/>
            <person name="Yu Y."/>
            <person name="Zhang B."/>
            <person name="Zhuang S."/>
            <person name="Wei H."/>
            <person name="Liu B."/>
            <person name="Lei M."/>
            <person name="Yu H."/>
            <person name="Li Y."/>
            <person name="Xu H."/>
            <person name="Wei S."/>
            <person name="He X."/>
            <person name="Fang L."/>
            <person name="Zhang Z."/>
            <person name="Zhang Y."/>
            <person name="Huang X."/>
            <person name="Su Z."/>
            <person name="Tong W."/>
            <person name="Li J."/>
            <person name="Tong Z."/>
            <person name="Li S."/>
            <person name="Ye J."/>
            <person name="Wang L."/>
            <person name="Fang L."/>
            <person name="Lei T."/>
            <person name="Chen C.-S."/>
            <person name="Chen H.-C."/>
            <person name="Xu Z."/>
            <person name="Li H."/>
            <person name="Huang H."/>
            <person name="Zhang F."/>
            <person name="Xu H."/>
            <person name="Li N."/>
            <person name="Zhao C."/>
            <person name="Li S."/>
            <person name="Dong L."/>
            <person name="Huang Y."/>
            <person name="Li L."/>
            <person name="Xi Y."/>
            <person name="Qi Q."/>
            <person name="Li W."/>
            <person name="Zhang B."/>
            <person name="Hu W."/>
            <person name="Zhang Y."/>
            <person name="Tian X."/>
            <person name="Jiao Y."/>
            <person name="Liang X."/>
            <person name="Jin J."/>
            <person name="Gao L."/>
            <person name="Zheng W."/>
            <person name="Hao B."/>
            <person name="Liu S.-M."/>
            <person name="Wang W."/>
            <person name="Yuan L."/>
            <person name="Cao M."/>
            <person name="McDermott J."/>
            <person name="Samudrala R."/>
            <person name="Wang J."/>
            <person name="Wong G.K.-S."/>
            <person name="Yang H."/>
        </authorList>
    </citation>
    <scope>NUCLEOTIDE SEQUENCE [LARGE SCALE GENOMIC DNA]</scope>
    <source>
        <strain>cv. Nipponbare</strain>
    </source>
</reference>
<reference key="6">
    <citation type="journal article" date="2005" name="Plant Physiol.">
        <title>Complementation of sugary-1 phenotype in rice endosperm with the wheat isoamylase1 gene supports a direct role for isoamylase1 in amylopectin biosynthesis.</title>
        <authorList>
            <person name="Kubo A."/>
            <person name="Rahman S."/>
            <person name="Utsumi Y."/>
            <person name="Li Z."/>
            <person name="Mukai Y."/>
            <person name="Yamamoto M."/>
            <person name="Ugaki M."/>
            <person name="Harada K."/>
            <person name="Satoh H."/>
            <person name="Konik-Rose C."/>
            <person name="Morell M."/>
            <person name="Nakamura Y."/>
        </authorList>
    </citation>
    <scope>TISSUE SPECIFICITY</scope>
</reference>
<reference key="7">
    <citation type="journal article" date="2006" name="Planta">
        <title>Structural and enzymatic characterization of the isoamylase1 homo-oligomer and the isoamylase1-isoamylase2 hetero-oligomer from rice endosperm.</title>
        <authorList>
            <person name="Utsumi Y."/>
            <person name="Nakamura Y."/>
        </authorList>
    </citation>
    <scope>PROTEIN SEQUENCE OF 35-44</scope>
    <scope>FUNCTION</scope>
    <scope>CATALYTIC ACTIVITY</scope>
    <scope>SUBUNIT</scope>
</reference>
<reference key="8">
    <citation type="journal article" date="2011" name="Plant Physiol.">
        <title>Functional diversity of isoamylase oligomers: the ISA1 homo-oligomer is essential for amylopectin biosynthesis in rice endosperm.</title>
        <authorList>
            <person name="Utsumi Y."/>
            <person name="Utsumi C."/>
            <person name="Sawada T."/>
            <person name="Fujita N."/>
            <person name="Nakamura Y."/>
        </authorList>
    </citation>
    <scope>FUNCTION</scope>
    <scope>SUBUNIT</scope>
</reference>
<sequence>MASLPAPPTPLGSCPRGRGGGRVVARPRRAGLACAARSCYRFRTDDDGVVDVAVSGEDGDGGGGGYAVSVEVPGTRGREGGLVLRASGSGEGVPLAPAAGGASLAAELSFDPTRAPFYLSFLLTDASGAEIRTHRKTSFRVPVGVGPGSPAPLGMSISGDGAVNFAVYSKNANAVSLYLYAAAVGGGGGDEPALEIDLDPYIHRTGNVWHVSLASVDGYVSYAFCCGGIRRPLLDPYAKVIGDFVSSNSVYDEGVTAPSMRCFASLAIAPSYNWGRDRHPRLPLEKLVVYRANVALFTKDRSSGLPDDAAGTFTGLSAKVEHFRSLGVNAILLEPVFPFHQVKGPYFPYHFFSPMNLYSSKGLSVSAIKSMKDMVRVMHRNGIEVLLEVVFTHTAEGESECQTISMRGIDNSSYYIANGIAGCKASILNCNHPVTQKLILDSLRHWVLDFHVDGFCFINAPFLVRGPGGEYLSRPPLLEAITFDPVLSMTKIIADPWSPLDISNVQFPFPHWKRWAEVNTRFSIDVRKFLKREALISDLATRLCGSGDLFSTRGPAFSFNHVSRNSGLSLVDLVSFSNDDLLSESSWNCGEEGPSENSAVLQTRLRQIRNFLFILFVSLGVPVLNMGDECGHSAAGSVSYKDRGPLNWRGMKTTFVKEVTGFISFLTALRSRRGDIFQRREFLKLENIHWYGSDLCEPGWDDPTSNFLCMHINAEVDEMAADSVRGDLYICFNANEESVSAALPALAEGSVWLRLVDTSLAFPGFFATESNPKVQQVPGLSSYHVEAHTCVLFESKSALA</sequence>
<evidence type="ECO:0000255" key="1"/>
<evidence type="ECO:0000256" key="2">
    <source>
        <dbReference type="SAM" id="MobiDB-lite"/>
    </source>
</evidence>
<evidence type="ECO:0000269" key="3">
    <source>
    </source>
</evidence>
<evidence type="ECO:0000269" key="4">
    <source>
    </source>
</evidence>
<evidence type="ECO:0000269" key="5">
    <source>
    </source>
</evidence>
<evidence type="ECO:0000303" key="6">
    <source>
    </source>
</evidence>
<evidence type="ECO:0000305" key="7"/>
<evidence type="ECO:0000312" key="8">
    <source>
        <dbReference type="EMBL" id="AAT93894.1"/>
    </source>
</evidence>
<evidence type="ECO:0000312" key="9">
    <source>
        <dbReference type="EMBL" id="BAS93869.1"/>
    </source>
</evidence>
<evidence type="ECO:0000312" key="10">
    <source>
        <dbReference type="EMBL" id="EEE62506.1"/>
    </source>
</evidence>
<keyword id="KW-0119">Carbohydrate metabolism</keyword>
<keyword id="KW-0150">Chloroplast</keyword>
<keyword id="KW-0903">Direct protein sequencing</keyword>
<keyword id="KW-0326">Glycosidase</keyword>
<keyword id="KW-0378">Hydrolase</keyword>
<keyword id="KW-0934">Plastid</keyword>
<keyword id="KW-1185">Reference proteome</keyword>
<keyword id="KW-0750">Starch biosynthesis</keyword>
<keyword id="KW-0809">Transit peptide</keyword>
<gene>
    <name evidence="6" type="primary">ISA2</name>
    <name evidence="9" type="ordered locus">Os05g0393700</name>
    <name evidence="7" type="ordered locus">LOC_Os05g32710</name>
    <name evidence="10" type="ORF">OsJ_17304</name>
    <name evidence="8" type="ORF">OSJNBa0014C03.3</name>
</gene>
<feature type="transit peptide" description="Chloroplast" evidence="4">
    <location>
        <begin position="1"/>
        <end position="34"/>
    </location>
</feature>
<feature type="chain" id="PRO_0000441799" description="Isoamylase 2, chloroplastic">
    <location>
        <begin position="35"/>
        <end position="800"/>
    </location>
</feature>
<feature type="region of interest" description="Disordered" evidence="2">
    <location>
        <begin position="1"/>
        <end position="22"/>
    </location>
</feature>
<feature type="compositionally biased region" description="Pro residues" evidence="2">
    <location>
        <begin position="1"/>
        <end position="10"/>
    </location>
</feature>
<feature type="sequence conflict" description="In Ref. 5; EEE62506." evidence="7" ref="5">
    <original>R</original>
    <variation>K</variation>
    <location>
        <position position="276"/>
    </location>
</feature>
<feature type="sequence conflict" description="In Ref. 5; EEE62506." evidence="7" ref="5">
    <original>K</original>
    <variation>N</variation>
    <location>
        <position position="286"/>
    </location>
</feature>
<feature type="sequence conflict" description="In Ref. 5; EEE62506." evidence="7" ref="5">
    <original>R</original>
    <variation>G</variation>
    <location>
        <position position="291"/>
    </location>
</feature>
<dbReference type="EC" id="3.2.1.68" evidence="4"/>
<dbReference type="EMBL" id="AC132483">
    <property type="protein sequence ID" value="AAT93894.1"/>
    <property type="molecule type" value="Genomic_DNA"/>
</dbReference>
<dbReference type="EMBL" id="AP008211">
    <property type="protein sequence ID" value="BAF17370.2"/>
    <property type="status" value="ALT_INIT"/>
    <property type="molecule type" value="Genomic_DNA"/>
</dbReference>
<dbReference type="EMBL" id="AP014961">
    <property type="protein sequence ID" value="BAS93869.1"/>
    <property type="status" value="ALT_INIT"/>
    <property type="molecule type" value="Genomic_DNA"/>
</dbReference>
<dbReference type="EMBL" id="CM000142">
    <property type="protein sequence ID" value="EEE62506.1"/>
    <property type="status" value="ALT_INIT"/>
    <property type="molecule type" value="Genomic_DNA"/>
</dbReference>
<dbReference type="SMR" id="Q6AU80"/>
<dbReference type="FunCoup" id="Q6AU80">
    <property type="interactions" value="930"/>
</dbReference>
<dbReference type="STRING" id="39947.Q6AU80"/>
<dbReference type="CAZy" id="CBM48">
    <property type="family name" value="Carbohydrate-Binding Module Family 48"/>
</dbReference>
<dbReference type="CAZy" id="GH13">
    <property type="family name" value="Glycoside Hydrolase Family 13"/>
</dbReference>
<dbReference type="PaxDb" id="39947-Q6AU80"/>
<dbReference type="EnsemblPlants" id="Os05t0393700-01">
    <property type="protein sequence ID" value="Os05t0393700-01"/>
    <property type="gene ID" value="Os05g0393700"/>
</dbReference>
<dbReference type="Gramene" id="Os05t0393700-01">
    <property type="protein sequence ID" value="Os05t0393700-01"/>
    <property type="gene ID" value="Os05g0393700"/>
</dbReference>
<dbReference type="KEGG" id="dosa:Os05g0393700"/>
<dbReference type="KEGG" id="osa:4338695"/>
<dbReference type="eggNOG" id="KOG0470">
    <property type="taxonomic scope" value="Eukaryota"/>
</dbReference>
<dbReference type="HOGENOM" id="CLU_011725_2_0_1"/>
<dbReference type="InParanoid" id="Q6AU80"/>
<dbReference type="OrthoDB" id="204980at2759"/>
<dbReference type="Proteomes" id="UP000000763">
    <property type="component" value="Chromosome 5"/>
</dbReference>
<dbReference type="Proteomes" id="UP000007752">
    <property type="component" value="Chromosome 5"/>
</dbReference>
<dbReference type="Proteomes" id="UP000059680">
    <property type="component" value="Chromosome 5"/>
</dbReference>
<dbReference type="GO" id="GO:0009507">
    <property type="term" value="C:chloroplast"/>
    <property type="evidence" value="ECO:0007669"/>
    <property type="project" value="UniProtKB-SubCell"/>
</dbReference>
<dbReference type="GO" id="GO:0043033">
    <property type="term" value="C:isoamylase complex"/>
    <property type="evidence" value="ECO:0000314"/>
    <property type="project" value="UniProtKB"/>
</dbReference>
<dbReference type="GO" id="GO:0019156">
    <property type="term" value="F:isoamylase activity"/>
    <property type="evidence" value="ECO:0000314"/>
    <property type="project" value="UniProtKB"/>
</dbReference>
<dbReference type="GO" id="GO:0010021">
    <property type="term" value="P:amylopectin biosynthetic process"/>
    <property type="evidence" value="ECO:0000314"/>
    <property type="project" value="UniProtKB"/>
</dbReference>
<dbReference type="GO" id="GO:0019252">
    <property type="term" value="P:starch biosynthetic process"/>
    <property type="evidence" value="ECO:0007669"/>
    <property type="project" value="UniProtKB-KW"/>
</dbReference>
<dbReference type="GO" id="GO:0005983">
    <property type="term" value="P:starch catabolic process"/>
    <property type="evidence" value="ECO:0000314"/>
    <property type="project" value="UniProtKB"/>
</dbReference>
<dbReference type="CDD" id="cd11346">
    <property type="entry name" value="AmyAc_plant_IsoA"/>
    <property type="match status" value="1"/>
</dbReference>
<dbReference type="CDD" id="cd02856">
    <property type="entry name" value="E_set_GDE_Isoamylase_N"/>
    <property type="match status" value="1"/>
</dbReference>
<dbReference type="FunFam" id="2.60.40.10:FF:002619">
    <property type="entry name" value="Isoamylase 2, chloroplastic"/>
    <property type="match status" value="1"/>
</dbReference>
<dbReference type="FunFam" id="2.60.40.1180:FF:000065">
    <property type="entry name" value="Isoamylase 2, chloroplastic"/>
    <property type="match status" value="1"/>
</dbReference>
<dbReference type="FunFam" id="3.20.20.80:FF:000148">
    <property type="entry name" value="Isoamylase 2, chloroplastic"/>
    <property type="match status" value="1"/>
</dbReference>
<dbReference type="Gene3D" id="3.20.20.80">
    <property type="entry name" value="Glycosidases"/>
    <property type="match status" value="1"/>
</dbReference>
<dbReference type="Gene3D" id="2.60.40.1180">
    <property type="entry name" value="Golgi alpha-mannosidase II"/>
    <property type="match status" value="1"/>
</dbReference>
<dbReference type="Gene3D" id="2.60.40.10">
    <property type="entry name" value="Immunoglobulins"/>
    <property type="match status" value="1"/>
</dbReference>
<dbReference type="InterPro" id="IPR044096">
    <property type="entry name" value="AmyAc_plant_ISA2"/>
</dbReference>
<dbReference type="InterPro" id="IPR044505">
    <property type="entry name" value="GlgX_Isoamylase_N_E_set"/>
</dbReference>
<dbReference type="InterPro" id="IPR006047">
    <property type="entry name" value="Glyco_hydro_13_cat_dom"/>
</dbReference>
<dbReference type="InterPro" id="IPR004193">
    <property type="entry name" value="Glyco_hydro_13_N"/>
</dbReference>
<dbReference type="InterPro" id="IPR013780">
    <property type="entry name" value="Glyco_hydro_b"/>
</dbReference>
<dbReference type="InterPro" id="IPR017853">
    <property type="entry name" value="Glycoside_hydrolase_SF"/>
</dbReference>
<dbReference type="InterPro" id="IPR013783">
    <property type="entry name" value="Ig-like_fold"/>
</dbReference>
<dbReference type="InterPro" id="IPR014756">
    <property type="entry name" value="Ig_E-set"/>
</dbReference>
<dbReference type="InterPro" id="IPR048650">
    <property type="entry name" value="ISOA1-3-like_C"/>
</dbReference>
<dbReference type="PANTHER" id="PTHR43002">
    <property type="entry name" value="GLYCOGEN DEBRANCHING ENZYME"/>
    <property type="match status" value="1"/>
</dbReference>
<dbReference type="Pfam" id="PF00128">
    <property type="entry name" value="Alpha-amylase"/>
    <property type="match status" value="1"/>
</dbReference>
<dbReference type="Pfam" id="PF02922">
    <property type="entry name" value="CBM_48"/>
    <property type="match status" value="1"/>
</dbReference>
<dbReference type="Pfam" id="PF21156">
    <property type="entry name" value="ISOA1-3_C"/>
    <property type="match status" value="1"/>
</dbReference>
<dbReference type="SMART" id="SM00642">
    <property type="entry name" value="Aamy"/>
    <property type="match status" value="1"/>
</dbReference>
<dbReference type="SUPFAM" id="SSF51445">
    <property type="entry name" value="(Trans)glycosidases"/>
    <property type="match status" value="1"/>
</dbReference>
<dbReference type="SUPFAM" id="SSF81296">
    <property type="entry name" value="E set domains"/>
    <property type="match status" value="1"/>
</dbReference>
<dbReference type="SUPFAM" id="SSF51011">
    <property type="entry name" value="Glycosyl hydrolase domain"/>
    <property type="match status" value="1"/>
</dbReference>
<proteinExistence type="evidence at protein level"/>